<sequence length="548" mass="61863">MMATLATSPPTSPTWPKRRPRAWALRCERYCCAAATYFPLAFVYSLTTWAVYVEASIGLKPSRSPWIGLPTSILGVLLYICLNASYTVAVFTDPGSPLTTGAGRHQYSALPVSELPEYTAYTVSSTGGSRYCKKCQCPKPDRAHHCSTCKRCVLKMDHHCPWLATCVGLYNYKAFLLFLIYTSLFCWVDFAVSATWIWTEVFNDAPYLETMLPVNVVLLAILGGIIGLVLTGFTAWHISLAVRGMTTIECLEKTRYVSPLRKALDRHRYEHILGNHRDGNRASPVADSFGHRLQDYGQQILDAHANAIPGVTRAEEGEERLSPAPEQPASHGVSDDQLTPAQQALTRSYAELERQREHDRYQDYLNEEDNGKLPHAFDLGWRRNLLHLFGNRPLLWLIPVCTTTGDGWRWEPSRKFLEAQEGLRLKREQDMANQQHYYRDLYSRNMNNGRAWLGPNAAAPTWNPHQPLDSFRDPERPATGVSMRTLAPMSPRPRPGDSDFEDDISETDPLNQQSVPANGAVNQLQKANEASSATTNRREDSSEWRDWD</sequence>
<gene>
    <name type="primary">pfa3</name>
    <name type="ORF">AFUA_2G16480</name>
</gene>
<name>PFA3_ASPFU</name>
<evidence type="ECO:0000250" key="1"/>
<evidence type="ECO:0000255" key="2"/>
<evidence type="ECO:0000255" key="3">
    <source>
        <dbReference type="PROSITE-ProRule" id="PRU00067"/>
    </source>
</evidence>
<evidence type="ECO:0000256" key="4">
    <source>
        <dbReference type="SAM" id="MobiDB-lite"/>
    </source>
</evidence>
<evidence type="ECO:0000305" key="5"/>
<keyword id="KW-0012">Acyltransferase</keyword>
<keyword id="KW-0449">Lipoprotein</keyword>
<keyword id="KW-0472">Membrane</keyword>
<keyword id="KW-0564">Palmitate</keyword>
<keyword id="KW-1185">Reference proteome</keyword>
<keyword id="KW-0808">Transferase</keyword>
<keyword id="KW-0812">Transmembrane</keyword>
<keyword id="KW-1133">Transmembrane helix</keyword>
<keyword id="KW-0926">Vacuole</keyword>
<proteinExistence type="inferred from homology"/>
<dbReference type="EC" id="2.3.1.225"/>
<dbReference type="EMBL" id="AAHF01000001">
    <property type="protein sequence ID" value="EAL93947.1"/>
    <property type="molecule type" value="Genomic_DNA"/>
</dbReference>
<dbReference type="RefSeq" id="XP_755985.1">
    <property type="nucleotide sequence ID" value="XM_750892.1"/>
</dbReference>
<dbReference type="SMR" id="Q4WZL8"/>
<dbReference type="STRING" id="330879.Q4WZL8"/>
<dbReference type="EnsemblFungi" id="EAL93947">
    <property type="protein sequence ID" value="EAL93947"/>
    <property type="gene ID" value="AFUA_2G16480"/>
</dbReference>
<dbReference type="GeneID" id="3512944"/>
<dbReference type="KEGG" id="afm:AFUA_2G16480"/>
<dbReference type="VEuPathDB" id="FungiDB:Afu2g16480"/>
<dbReference type="eggNOG" id="KOG1315">
    <property type="taxonomic scope" value="Eukaryota"/>
</dbReference>
<dbReference type="HOGENOM" id="CLU_024136_0_1_1"/>
<dbReference type="InParanoid" id="Q4WZL8"/>
<dbReference type="OMA" id="GEFRFCK"/>
<dbReference type="OrthoDB" id="302728at2759"/>
<dbReference type="Proteomes" id="UP000002530">
    <property type="component" value="Chromosome 2"/>
</dbReference>
<dbReference type="GO" id="GO:0005783">
    <property type="term" value="C:endoplasmic reticulum"/>
    <property type="evidence" value="ECO:0000318"/>
    <property type="project" value="GO_Central"/>
</dbReference>
<dbReference type="GO" id="GO:0005794">
    <property type="term" value="C:Golgi apparatus"/>
    <property type="evidence" value="ECO:0000318"/>
    <property type="project" value="GO_Central"/>
</dbReference>
<dbReference type="GO" id="GO:0005774">
    <property type="term" value="C:vacuolar membrane"/>
    <property type="evidence" value="ECO:0007669"/>
    <property type="project" value="UniProtKB-SubCell"/>
</dbReference>
<dbReference type="GO" id="GO:0019706">
    <property type="term" value="F:protein-cysteine S-palmitoyltransferase activity"/>
    <property type="evidence" value="ECO:0000318"/>
    <property type="project" value="GO_Central"/>
</dbReference>
<dbReference type="GO" id="GO:0006612">
    <property type="term" value="P:protein targeting to membrane"/>
    <property type="evidence" value="ECO:0000318"/>
    <property type="project" value="GO_Central"/>
</dbReference>
<dbReference type="InterPro" id="IPR001594">
    <property type="entry name" value="Palmitoyltrfase_DHHC"/>
</dbReference>
<dbReference type="InterPro" id="IPR039859">
    <property type="entry name" value="PFA4/ZDH16/20/ERF2-like"/>
</dbReference>
<dbReference type="PANTHER" id="PTHR12246">
    <property type="entry name" value="PALMITOYLTRANSFERASE ZDHHC16"/>
    <property type="match status" value="1"/>
</dbReference>
<dbReference type="Pfam" id="PF01529">
    <property type="entry name" value="DHHC"/>
    <property type="match status" value="1"/>
</dbReference>
<dbReference type="PROSITE" id="PS50216">
    <property type="entry name" value="DHHC"/>
    <property type="match status" value="1"/>
</dbReference>
<protein>
    <recommendedName>
        <fullName>Palmitoyltransferase pfa3</fullName>
        <ecNumber>2.3.1.225</ecNumber>
    </recommendedName>
    <alternativeName>
        <fullName>Protein fatty acyltransferase 3</fullName>
    </alternativeName>
</protein>
<accession>Q4WZL8</accession>
<organism>
    <name type="scientific">Aspergillus fumigatus (strain ATCC MYA-4609 / CBS 101355 / FGSC A1100 / Af293)</name>
    <name type="common">Neosartorya fumigata</name>
    <dbReference type="NCBI Taxonomy" id="330879"/>
    <lineage>
        <taxon>Eukaryota</taxon>
        <taxon>Fungi</taxon>
        <taxon>Dikarya</taxon>
        <taxon>Ascomycota</taxon>
        <taxon>Pezizomycotina</taxon>
        <taxon>Eurotiomycetes</taxon>
        <taxon>Eurotiomycetidae</taxon>
        <taxon>Eurotiales</taxon>
        <taxon>Aspergillaceae</taxon>
        <taxon>Aspergillus</taxon>
        <taxon>Aspergillus subgen. Fumigati</taxon>
    </lineage>
</organism>
<reference key="1">
    <citation type="journal article" date="2005" name="Nature">
        <title>Genomic sequence of the pathogenic and allergenic filamentous fungus Aspergillus fumigatus.</title>
        <authorList>
            <person name="Nierman W.C."/>
            <person name="Pain A."/>
            <person name="Anderson M.J."/>
            <person name="Wortman J.R."/>
            <person name="Kim H.S."/>
            <person name="Arroyo J."/>
            <person name="Berriman M."/>
            <person name="Abe K."/>
            <person name="Archer D.B."/>
            <person name="Bermejo C."/>
            <person name="Bennett J.W."/>
            <person name="Bowyer P."/>
            <person name="Chen D."/>
            <person name="Collins M."/>
            <person name="Coulsen R."/>
            <person name="Davies R."/>
            <person name="Dyer P.S."/>
            <person name="Farman M.L."/>
            <person name="Fedorova N."/>
            <person name="Fedorova N.D."/>
            <person name="Feldblyum T.V."/>
            <person name="Fischer R."/>
            <person name="Fosker N."/>
            <person name="Fraser A."/>
            <person name="Garcia J.L."/>
            <person name="Garcia M.J."/>
            <person name="Goble A."/>
            <person name="Goldman G.H."/>
            <person name="Gomi K."/>
            <person name="Griffith-Jones S."/>
            <person name="Gwilliam R."/>
            <person name="Haas B.J."/>
            <person name="Haas H."/>
            <person name="Harris D.E."/>
            <person name="Horiuchi H."/>
            <person name="Huang J."/>
            <person name="Humphray S."/>
            <person name="Jimenez J."/>
            <person name="Keller N."/>
            <person name="Khouri H."/>
            <person name="Kitamoto K."/>
            <person name="Kobayashi T."/>
            <person name="Konzack S."/>
            <person name="Kulkarni R."/>
            <person name="Kumagai T."/>
            <person name="Lafton A."/>
            <person name="Latge J.-P."/>
            <person name="Li W."/>
            <person name="Lord A."/>
            <person name="Lu C."/>
            <person name="Majoros W.H."/>
            <person name="May G.S."/>
            <person name="Miller B.L."/>
            <person name="Mohamoud Y."/>
            <person name="Molina M."/>
            <person name="Monod M."/>
            <person name="Mouyna I."/>
            <person name="Mulligan S."/>
            <person name="Murphy L.D."/>
            <person name="O'Neil S."/>
            <person name="Paulsen I."/>
            <person name="Penalva M.A."/>
            <person name="Pertea M."/>
            <person name="Price C."/>
            <person name="Pritchard B.L."/>
            <person name="Quail M.A."/>
            <person name="Rabbinowitsch E."/>
            <person name="Rawlins N."/>
            <person name="Rajandream M.A."/>
            <person name="Reichard U."/>
            <person name="Renauld H."/>
            <person name="Robson G.D."/>
            <person name="Rodriguez de Cordoba S."/>
            <person name="Rodriguez-Pena J.M."/>
            <person name="Ronning C.M."/>
            <person name="Rutter S."/>
            <person name="Salzberg S.L."/>
            <person name="Sanchez M."/>
            <person name="Sanchez-Ferrero J.C."/>
            <person name="Saunders D."/>
            <person name="Seeger K."/>
            <person name="Squares R."/>
            <person name="Squares S."/>
            <person name="Takeuchi M."/>
            <person name="Tekaia F."/>
            <person name="Turner G."/>
            <person name="Vazquez de Aldana C.R."/>
            <person name="Weidman J."/>
            <person name="White O."/>
            <person name="Woodward J.R."/>
            <person name="Yu J.-H."/>
            <person name="Fraser C.M."/>
            <person name="Galagan J.E."/>
            <person name="Asai K."/>
            <person name="Machida M."/>
            <person name="Hall N."/>
            <person name="Barrell B.G."/>
            <person name="Denning D.W."/>
        </authorList>
    </citation>
    <scope>NUCLEOTIDE SEQUENCE [LARGE SCALE GENOMIC DNA]</scope>
    <source>
        <strain>ATCC MYA-4609 / CBS 101355 / FGSC A1100 / Af293</strain>
    </source>
</reference>
<comment type="function">
    <text evidence="1">Palmitoyltransferase specific for VAC8. Palmitoylates VAC8 at one or more of its N-terminal cysteine residues, which is required for its proper membrane localization (By similarity).</text>
</comment>
<comment type="catalytic activity">
    <reaction>
        <text>L-cysteinyl-[protein] + hexadecanoyl-CoA = S-hexadecanoyl-L-cysteinyl-[protein] + CoA</text>
        <dbReference type="Rhea" id="RHEA:36683"/>
        <dbReference type="Rhea" id="RHEA-COMP:10131"/>
        <dbReference type="Rhea" id="RHEA-COMP:11032"/>
        <dbReference type="ChEBI" id="CHEBI:29950"/>
        <dbReference type="ChEBI" id="CHEBI:57287"/>
        <dbReference type="ChEBI" id="CHEBI:57379"/>
        <dbReference type="ChEBI" id="CHEBI:74151"/>
        <dbReference type="EC" id="2.3.1.225"/>
    </reaction>
</comment>
<comment type="subcellular location">
    <subcellularLocation>
        <location evidence="1">Vacuole membrane</location>
        <topology evidence="1">Multi-pass membrane protein</topology>
    </subcellularLocation>
</comment>
<comment type="domain">
    <text evidence="1">The DHHC domain is required for palmitoyltransferase activity.</text>
</comment>
<comment type="PTM">
    <text evidence="1">Autopalmitoylated.</text>
</comment>
<comment type="similarity">
    <text evidence="5">Belongs to the DHHC palmitoyltransferase family. PFA3 subfamily.</text>
</comment>
<feature type="chain" id="PRO_0000212950" description="Palmitoyltransferase pfa3">
    <location>
        <begin position="1"/>
        <end position="548"/>
    </location>
</feature>
<feature type="topological domain" description="Cytoplasmic" evidence="2">
    <location>
        <begin position="1"/>
        <end position="32"/>
    </location>
</feature>
<feature type="transmembrane region" description="Helical" evidence="2">
    <location>
        <begin position="33"/>
        <end position="53"/>
    </location>
</feature>
<feature type="topological domain" description="Extracellular" evidence="2">
    <location>
        <begin position="54"/>
        <end position="70"/>
    </location>
</feature>
<feature type="transmembrane region" description="Helical" evidence="2">
    <location>
        <begin position="71"/>
        <end position="91"/>
    </location>
</feature>
<feature type="topological domain" description="Cytoplasmic" evidence="2">
    <location>
        <begin position="92"/>
        <end position="173"/>
    </location>
</feature>
<feature type="transmembrane region" description="Helical" evidence="2">
    <location>
        <begin position="174"/>
        <end position="194"/>
    </location>
</feature>
<feature type="topological domain" description="Extracellular" evidence="2">
    <location>
        <begin position="195"/>
        <end position="215"/>
    </location>
</feature>
<feature type="transmembrane region" description="Helical" evidence="2">
    <location>
        <begin position="216"/>
        <end position="236"/>
    </location>
</feature>
<feature type="topological domain" description="Cytoplasmic" evidence="2">
    <location>
        <begin position="237"/>
        <end position="548"/>
    </location>
</feature>
<feature type="domain" description="DHHC" evidence="3">
    <location>
        <begin position="130"/>
        <end position="180"/>
    </location>
</feature>
<feature type="region of interest" description="Disordered" evidence="4">
    <location>
        <begin position="313"/>
        <end position="339"/>
    </location>
</feature>
<feature type="region of interest" description="Disordered" evidence="4">
    <location>
        <begin position="463"/>
        <end position="548"/>
    </location>
</feature>
<feature type="compositionally biased region" description="Polar residues" evidence="4">
    <location>
        <begin position="508"/>
        <end position="535"/>
    </location>
</feature>
<feature type="compositionally biased region" description="Basic and acidic residues" evidence="4">
    <location>
        <begin position="536"/>
        <end position="548"/>
    </location>
</feature>